<dbReference type="EMBL" id="X92396">
    <property type="protein sequence ID" value="CAA63133.1"/>
    <property type="molecule type" value="mRNA"/>
</dbReference>
<dbReference type="EMBL" id="AJ271736">
    <property type="protein sequence ID" value="CAB96816.1"/>
    <property type="molecule type" value="Genomic_DNA"/>
</dbReference>
<dbReference type="EMBL" id="AJ549301">
    <property type="protein sequence ID" value="CAD70593.2"/>
    <property type="molecule type" value="mRNA"/>
</dbReference>
<dbReference type="EMBL" id="AJ295938">
    <property type="protein sequence ID" value="CAC16891.1"/>
    <property type="molecule type" value="mRNA"/>
</dbReference>
<dbReference type="EMBL" id="AK222794">
    <property type="protein sequence ID" value="BAD96514.1"/>
    <property type="molecule type" value="mRNA"/>
</dbReference>
<dbReference type="EMBL" id="BC056141">
    <property type="protein sequence ID" value="AAH56141.1"/>
    <property type="molecule type" value="mRNA"/>
</dbReference>
<dbReference type="EMBL" id="BI547528">
    <property type="status" value="NOT_ANNOTATED_CDS"/>
    <property type="molecule type" value="mRNA"/>
</dbReference>
<dbReference type="CCDS" id="CCDS14770.4">
    <molecule id="P51809-1"/>
</dbReference>
<dbReference type="CCDS" id="CCDS48199.1">
    <molecule id="P51809-3"/>
</dbReference>
<dbReference type="CCDS" id="CCDS55548.1">
    <molecule id="P51809-2"/>
</dbReference>
<dbReference type="RefSeq" id="NP_001138621.1">
    <molecule id="P51809-3"/>
    <property type="nucleotide sequence ID" value="NM_001145149.3"/>
</dbReference>
<dbReference type="RefSeq" id="NP_001172112.1">
    <molecule id="P51809-2"/>
    <property type="nucleotide sequence ID" value="NM_001185183.2"/>
</dbReference>
<dbReference type="RefSeq" id="NP_005629.1">
    <molecule id="P51809-1"/>
    <property type="nucleotide sequence ID" value="NM_005638.6"/>
</dbReference>
<dbReference type="RefSeq" id="XP_054184297.1">
    <molecule id="P51809-2"/>
    <property type="nucleotide sequence ID" value="XM_054328322.1"/>
</dbReference>
<dbReference type="RefSeq" id="XP_054184298.1">
    <molecule id="P51809-1"/>
    <property type="nucleotide sequence ID" value="XM_054328323.1"/>
</dbReference>
<dbReference type="PDB" id="2DMW">
    <property type="method" value="NMR"/>
    <property type="chains" value="A=1-118"/>
</dbReference>
<dbReference type="PDBsum" id="2DMW"/>
<dbReference type="BMRB" id="P51809"/>
<dbReference type="SMR" id="P51809"/>
<dbReference type="BioGRID" id="112712">
    <property type="interactions" value="126"/>
</dbReference>
<dbReference type="ComplexPortal" id="CPX-25783">
    <property type="entry name" value="SNARE complex STX17-SNAP29-VAMP7"/>
</dbReference>
<dbReference type="CORUM" id="P51809"/>
<dbReference type="FunCoup" id="P51809">
    <property type="interactions" value="1596"/>
</dbReference>
<dbReference type="IntAct" id="P51809">
    <property type="interactions" value="89"/>
</dbReference>
<dbReference type="MINT" id="P51809"/>
<dbReference type="STRING" id="9606.ENSP00000262640"/>
<dbReference type="iPTMnet" id="P51809"/>
<dbReference type="MetOSite" id="P51809"/>
<dbReference type="PhosphoSitePlus" id="P51809"/>
<dbReference type="SwissPalm" id="P51809"/>
<dbReference type="BioMuta" id="VAMP7"/>
<dbReference type="DMDM" id="1723133"/>
<dbReference type="jPOST" id="P51809"/>
<dbReference type="MassIVE" id="P51809"/>
<dbReference type="PaxDb" id="9606-ENSP00000262640"/>
<dbReference type="PeptideAtlas" id="P51809"/>
<dbReference type="ProteomicsDB" id="56403">
    <molecule id="P51809-1"/>
</dbReference>
<dbReference type="ProteomicsDB" id="56404">
    <molecule id="P51809-2"/>
</dbReference>
<dbReference type="ProteomicsDB" id="56405">
    <molecule id="P51809-3"/>
</dbReference>
<dbReference type="Pumba" id="P51809"/>
<dbReference type="Antibodypedia" id="31441">
    <property type="antibodies" value="226 antibodies from 35 providers"/>
</dbReference>
<dbReference type="DNASU" id="6845"/>
<dbReference type="Ensembl" id="ENST00000262640.11">
    <molecule id="P51809-2"/>
    <property type="protein sequence ID" value="ENSP00000262640.6"/>
    <property type="gene ID" value="ENSG00000124333.16"/>
</dbReference>
<dbReference type="Ensembl" id="ENST00000286448.12">
    <molecule id="P51809-1"/>
    <property type="protein sequence ID" value="ENSP00000286448.6"/>
    <property type="gene ID" value="ENSG00000124333.16"/>
</dbReference>
<dbReference type="Ensembl" id="ENST00000460621.6">
    <molecule id="P51809-3"/>
    <property type="protein sequence ID" value="ENSP00000427822.1"/>
    <property type="gene ID" value="ENSG00000124333.16"/>
</dbReference>
<dbReference type="Ensembl" id="ENST00000711260.1">
    <molecule id="P51809-1"/>
    <property type="protein sequence ID" value="ENSP00000518622.1"/>
    <property type="gene ID" value="ENSG00000292366.1"/>
</dbReference>
<dbReference type="Ensembl" id="ENST00000711264.1">
    <molecule id="P51809-2"/>
    <property type="protein sequence ID" value="ENSP00000518620.1"/>
    <property type="gene ID" value="ENSG00000292366.1"/>
</dbReference>
<dbReference type="Ensembl" id="ENST00000711265.1">
    <molecule id="P51809-3"/>
    <property type="protein sequence ID" value="ENSP00000518619.1"/>
    <property type="gene ID" value="ENSG00000292366.1"/>
</dbReference>
<dbReference type="GeneID" id="6845"/>
<dbReference type="KEGG" id="hsa:6845"/>
<dbReference type="MANE-Select" id="ENST00000286448.12">
    <property type="protein sequence ID" value="ENSP00000286448.6"/>
    <property type="RefSeq nucleotide sequence ID" value="NM_005638.6"/>
    <property type="RefSeq protein sequence ID" value="NP_005629.1"/>
</dbReference>
<dbReference type="UCSC" id="uc004fnr.4">
    <molecule id="P51809-1"/>
    <property type="organism name" value="human"/>
</dbReference>
<dbReference type="AGR" id="HGNC:11486"/>
<dbReference type="CTD" id="6845"/>
<dbReference type="DisGeNET" id="6845"/>
<dbReference type="GeneCards" id="VAMP7"/>
<dbReference type="HGNC" id="HGNC:11486">
    <property type="gene designation" value="VAMP7"/>
</dbReference>
<dbReference type="HPA" id="ENSG00000124333">
    <property type="expression patterns" value="Low tissue specificity"/>
</dbReference>
<dbReference type="MalaCards" id="VAMP7"/>
<dbReference type="MIM" id="300053">
    <property type="type" value="gene"/>
</dbReference>
<dbReference type="neXtProt" id="NX_P51809"/>
<dbReference type="OpenTargets" id="ENSG00000124333"/>
<dbReference type="Orphanet" id="251510">
    <property type="disease" value="46,XY partial gonadal dysgenesis"/>
</dbReference>
<dbReference type="PharmGKB" id="PA162408786"/>
<dbReference type="VEuPathDB" id="HostDB:ENSG00000124333"/>
<dbReference type="eggNOG" id="KOG0859">
    <property type="taxonomic scope" value="Eukaryota"/>
</dbReference>
<dbReference type="GeneTree" id="ENSGT00510000047733"/>
<dbReference type="HOGENOM" id="CLU_064620_1_1_1"/>
<dbReference type="InParanoid" id="P51809"/>
<dbReference type="OMA" id="NTKLMIM"/>
<dbReference type="OrthoDB" id="248747at2759"/>
<dbReference type="PAN-GO" id="P51809">
    <property type="GO annotations" value="6 GO annotations based on evolutionary models"/>
</dbReference>
<dbReference type="PhylomeDB" id="P51809"/>
<dbReference type="TreeFam" id="TF323448"/>
<dbReference type="PathwayCommons" id="P51809"/>
<dbReference type="Reactome" id="R-HSA-199992">
    <property type="pathway name" value="trans-Golgi Network Vesicle Budding"/>
</dbReference>
<dbReference type="Reactome" id="R-HSA-432720">
    <property type="pathway name" value="Lysosome Vesicle Biogenesis"/>
</dbReference>
<dbReference type="Reactome" id="R-HSA-432722">
    <property type="pathway name" value="Golgi Associated Vesicle Biogenesis"/>
</dbReference>
<dbReference type="Reactome" id="R-HSA-8856825">
    <property type="pathway name" value="Cargo recognition for clathrin-mediated endocytosis"/>
</dbReference>
<dbReference type="Reactome" id="R-HSA-8856828">
    <property type="pathway name" value="Clathrin-mediated endocytosis"/>
</dbReference>
<dbReference type="Reactome" id="R-HSA-9020591">
    <property type="pathway name" value="Interleukin-12 signaling"/>
</dbReference>
<dbReference type="SignaLink" id="P51809"/>
<dbReference type="SIGNOR" id="P51809"/>
<dbReference type="BioGRID-ORCS" id="6845">
    <property type="hits" value="8 hits in 631 CRISPR screens"/>
</dbReference>
<dbReference type="ChiTaRS" id="VAMP7">
    <property type="organism name" value="human"/>
</dbReference>
<dbReference type="EvolutionaryTrace" id="P51809"/>
<dbReference type="GeneWiki" id="SYBL1"/>
<dbReference type="GenomeRNAi" id="6845"/>
<dbReference type="Pharos" id="P51809">
    <property type="development level" value="Tbio"/>
</dbReference>
<dbReference type="PRO" id="PR:P51809"/>
<dbReference type="Proteomes" id="UP000005640">
    <property type="component" value="Chromosome X"/>
</dbReference>
<dbReference type="Proteomes" id="UP000005640">
    <property type="component" value="Chromosome Y"/>
</dbReference>
<dbReference type="RNAct" id="P51809">
    <property type="molecule type" value="protein"/>
</dbReference>
<dbReference type="Bgee" id="ENSG00000124333">
    <property type="expression patterns" value="Expressed in secondary oocyte and 210 other cell types or tissues"/>
</dbReference>
<dbReference type="ExpressionAtlas" id="P51809">
    <property type="expression patterns" value="baseline and differential"/>
</dbReference>
<dbReference type="GO" id="GO:0035577">
    <property type="term" value="C:azurophil granule membrane"/>
    <property type="evidence" value="ECO:0000314"/>
    <property type="project" value="UniProtKB"/>
</dbReference>
<dbReference type="GO" id="GO:0030669">
    <property type="term" value="C:clathrin-coated endocytic vesicle membrane"/>
    <property type="evidence" value="ECO:0000304"/>
    <property type="project" value="Reactome"/>
</dbReference>
<dbReference type="GO" id="GO:0005737">
    <property type="term" value="C:cytoplasm"/>
    <property type="evidence" value="ECO:0000314"/>
    <property type="project" value="UniProtKB"/>
</dbReference>
<dbReference type="GO" id="GO:0005789">
    <property type="term" value="C:endoplasmic reticulum membrane"/>
    <property type="evidence" value="ECO:0000250"/>
    <property type="project" value="UniProtKB"/>
</dbReference>
<dbReference type="GO" id="GO:0070062">
    <property type="term" value="C:extracellular exosome"/>
    <property type="evidence" value="ECO:0007005"/>
    <property type="project" value="UniProtKB"/>
</dbReference>
<dbReference type="GO" id="GO:0043231">
    <property type="term" value="C:intracellular membrane-bounded organelle"/>
    <property type="evidence" value="ECO:0000314"/>
    <property type="project" value="HPA"/>
</dbReference>
<dbReference type="GO" id="GO:0030027">
    <property type="term" value="C:lamellipodium"/>
    <property type="evidence" value="ECO:0000314"/>
    <property type="project" value="UniProtKB"/>
</dbReference>
<dbReference type="GO" id="GO:0031902">
    <property type="term" value="C:late endosome membrane"/>
    <property type="evidence" value="ECO:0000250"/>
    <property type="project" value="UniProtKB"/>
</dbReference>
<dbReference type="GO" id="GO:0005765">
    <property type="term" value="C:lysosomal membrane"/>
    <property type="evidence" value="ECO:0007005"/>
    <property type="project" value="UniProtKB"/>
</dbReference>
<dbReference type="GO" id="GO:0016020">
    <property type="term" value="C:membrane"/>
    <property type="evidence" value="ECO:0000314"/>
    <property type="project" value="UniProtKB"/>
</dbReference>
<dbReference type="GO" id="GO:0043005">
    <property type="term" value="C:neuron projection"/>
    <property type="evidence" value="ECO:0000250"/>
    <property type="project" value="UniProtKB"/>
</dbReference>
<dbReference type="GO" id="GO:0045335">
    <property type="term" value="C:phagocytic vesicle"/>
    <property type="evidence" value="ECO:0000250"/>
    <property type="project" value="UniProtKB"/>
</dbReference>
<dbReference type="GO" id="GO:0030670">
    <property type="term" value="C:phagocytic vesicle membrane"/>
    <property type="evidence" value="ECO:0007669"/>
    <property type="project" value="UniProtKB-SubCell"/>
</dbReference>
<dbReference type="GO" id="GO:0005886">
    <property type="term" value="C:plasma membrane"/>
    <property type="evidence" value="ECO:0000314"/>
    <property type="project" value="UniProtKB"/>
</dbReference>
<dbReference type="GO" id="GO:0031091">
    <property type="term" value="C:platelet alpha granule"/>
    <property type="evidence" value="ECO:0000314"/>
    <property type="project" value="UniProtKB"/>
</dbReference>
<dbReference type="GO" id="GO:0031143">
    <property type="term" value="C:pseudopodium"/>
    <property type="evidence" value="ECO:0000314"/>
    <property type="project" value="UniProtKB"/>
</dbReference>
<dbReference type="GO" id="GO:0030141">
    <property type="term" value="C:secretory granule"/>
    <property type="evidence" value="ECO:0000314"/>
    <property type="project" value="UniProtKB"/>
</dbReference>
<dbReference type="GO" id="GO:0030667">
    <property type="term" value="C:secretory granule membrane"/>
    <property type="evidence" value="ECO:0000314"/>
    <property type="project" value="UniProtKB"/>
</dbReference>
<dbReference type="GO" id="GO:0031201">
    <property type="term" value="C:SNARE complex"/>
    <property type="evidence" value="ECO:0000314"/>
    <property type="project" value="UniProtKB"/>
</dbReference>
<dbReference type="GO" id="GO:0045202">
    <property type="term" value="C:synapse"/>
    <property type="evidence" value="ECO:0007669"/>
    <property type="project" value="UniProtKB-SubCell"/>
</dbReference>
<dbReference type="GO" id="GO:0005802">
    <property type="term" value="C:trans-Golgi network"/>
    <property type="evidence" value="ECO:0000314"/>
    <property type="project" value="UniProtKB"/>
</dbReference>
<dbReference type="GO" id="GO:0030658">
    <property type="term" value="C:transport vesicle membrane"/>
    <property type="evidence" value="ECO:0007669"/>
    <property type="project" value="UniProtKB-SubCell"/>
</dbReference>
<dbReference type="GO" id="GO:0005484">
    <property type="term" value="F:SNAP receptor activity"/>
    <property type="evidence" value="ECO:0000318"/>
    <property type="project" value="GO_Central"/>
</dbReference>
<dbReference type="GO" id="GO:0000149">
    <property type="term" value="F:SNARE binding"/>
    <property type="evidence" value="ECO:0000318"/>
    <property type="project" value="GO_Central"/>
</dbReference>
<dbReference type="GO" id="GO:0017156">
    <property type="term" value="P:calcium-ion regulated exocytosis"/>
    <property type="evidence" value="ECO:0000250"/>
    <property type="project" value="UniProtKB"/>
</dbReference>
<dbReference type="GO" id="GO:0006888">
    <property type="term" value="P:endoplasmic reticulum to Golgi vesicle-mediated transport"/>
    <property type="evidence" value="ECO:0000250"/>
    <property type="project" value="UniProtKB"/>
</dbReference>
<dbReference type="GO" id="GO:0008333">
    <property type="term" value="P:endosome to lysosome transport"/>
    <property type="evidence" value="ECO:0000314"/>
    <property type="project" value="UniProtKB"/>
</dbReference>
<dbReference type="GO" id="GO:0043308">
    <property type="term" value="P:eosinophil degranulation"/>
    <property type="evidence" value="ECO:0000315"/>
    <property type="project" value="UniProtKB"/>
</dbReference>
<dbReference type="GO" id="GO:0006887">
    <property type="term" value="P:exocytosis"/>
    <property type="evidence" value="ECO:0000318"/>
    <property type="project" value="GO_Central"/>
</dbReference>
<dbReference type="GO" id="GO:0043320">
    <property type="term" value="P:natural killer cell degranulation"/>
    <property type="evidence" value="ECO:0000315"/>
    <property type="project" value="UniProtKB"/>
</dbReference>
<dbReference type="GO" id="GO:0043312">
    <property type="term" value="P:neutrophil degranulation"/>
    <property type="evidence" value="ECO:0000315"/>
    <property type="project" value="UniProtKB"/>
</dbReference>
<dbReference type="GO" id="GO:0006911">
    <property type="term" value="P:phagocytosis, engulfment"/>
    <property type="evidence" value="ECO:0000250"/>
    <property type="project" value="UniProtKB"/>
</dbReference>
<dbReference type="GO" id="GO:1903595">
    <property type="term" value="P:positive regulation of histamine secretion by mast cell"/>
    <property type="evidence" value="ECO:0000315"/>
    <property type="project" value="UniProtKB"/>
</dbReference>
<dbReference type="GO" id="GO:0015031">
    <property type="term" value="P:protein transport"/>
    <property type="evidence" value="ECO:0007669"/>
    <property type="project" value="UniProtKB-KW"/>
</dbReference>
<dbReference type="GO" id="GO:0006906">
    <property type="term" value="P:vesicle fusion"/>
    <property type="evidence" value="ECO:0000314"/>
    <property type="project" value="UniProtKB"/>
</dbReference>
<dbReference type="GO" id="GO:0016192">
    <property type="term" value="P:vesicle-mediated transport"/>
    <property type="evidence" value="ECO:0000314"/>
    <property type="project" value="UniProtKB"/>
</dbReference>
<dbReference type="CDD" id="cd14824">
    <property type="entry name" value="Longin"/>
    <property type="match status" value="1"/>
</dbReference>
<dbReference type="CDD" id="cd15871">
    <property type="entry name" value="R-SNARE_VAMP7"/>
    <property type="match status" value="1"/>
</dbReference>
<dbReference type="FunFam" id="1.20.5.110:FF:000004">
    <property type="entry name" value="Vesicle-associated membrane protein 7"/>
    <property type="match status" value="1"/>
</dbReference>
<dbReference type="FunFam" id="3.30.450.50:FF:000006">
    <property type="entry name" value="Vesicle-associated membrane protein 7"/>
    <property type="match status" value="1"/>
</dbReference>
<dbReference type="Gene3D" id="1.20.5.110">
    <property type="match status" value="1"/>
</dbReference>
<dbReference type="Gene3D" id="3.30.450.50">
    <property type="entry name" value="Longin domain"/>
    <property type="match status" value="1"/>
</dbReference>
<dbReference type="InterPro" id="IPR011012">
    <property type="entry name" value="Longin-like_dom_sf"/>
</dbReference>
<dbReference type="InterPro" id="IPR010908">
    <property type="entry name" value="Longin_dom"/>
</dbReference>
<dbReference type="InterPro" id="IPR001388">
    <property type="entry name" value="Synaptobrevin-like"/>
</dbReference>
<dbReference type="InterPro" id="IPR051097">
    <property type="entry name" value="Synaptobrevin-like_transport"/>
</dbReference>
<dbReference type="InterPro" id="IPR042855">
    <property type="entry name" value="V_SNARE_CC"/>
</dbReference>
<dbReference type="PANTHER" id="PTHR21136">
    <property type="entry name" value="SNARE PROTEINS"/>
    <property type="match status" value="1"/>
</dbReference>
<dbReference type="PANTHER" id="PTHR21136:SF196">
    <property type="entry name" value="VESICLE-ASSOCIATED MEMBRANE PROTEIN 7"/>
    <property type="match status" value="1"/>
</dbReference>
<dbReference type="Pfam" id="PF13774">
    <property type="entry name" value="Longin"/>
    <property type="match status" value="1"/>
</dbReference>
<dbReference type="Pfam" id="PF00957">
    <property type="entry name" value="Synaptobrevin"/>
    <property type="match status" value="1"/>
</dbReference>
<dbReference type="PRINTS" id="PR00219">
    <property type="entry name" value="SYNAPTOBREVN"/>
</dbReference>
<dbReference type="SMART" id="SM01270">
    <property type="entry name" value="Longin"/>
    <property type="match status" value="1"/>
</dbReference>
<dbReference type="SUPFAM" id="SSF58038">
    <property type="entry name" value="SNARE fusion complex"/>
    <property type="match status" value="1"/>
</dbReference>
<dbReference type="SUPFAM" id="SSF64356">
    <property type="entry name" value="SNARE-like"/>
    <property type="match status" value="1"/>
</dbReference>
<dbReference type="PROSITE" id="PS50859">
    <property type="entry name" value="LONGIN"/>
    <property type="match status" value="1"/>
</dbReference>
<dbReference type="PROSITE" id="PS00417">
    <property type="entry name" value="SYNAPTOBREVIN"/>
    <property type="match status" value="1"/>
</dbReference>
<dbReference type="PROSITE" id="PS50892">
    <property type="entry name" value="V_SNARE"/>
    <property type="match status" value="1"/>
</dbReference>
<protein>
    <recommendedName>
        <fullName>Vesicle-associated membrane protein 7</fullName>
        <shortName>VAMP-7</shortName>
    </recommendedName>
    <alternativeName>
        <fullName>Synaptobrevin-like protein 1</fullName>
    </alternativeName>
    <alternativeName>
        <fullName>Tetanus-insensitive VAMP</fullName>
        <shortName>Ti-VAMP</shortName>
    </alternativeName>
</protein>
<reference key="1">
    <citation type="journal article" date="1996" name="Nat. Genet.">
        <title>A synaptobrevin-like gene in the Xq28 pseudoautosomal region undergoes X inactivation.</title>
        <authorList>
            <person name="D'Esposito M."/>
            <person name="Ciccodicola A."/>
            <person name="Gianfrancesco F."/>
            <person name="Esposito T."/>
            <person name="Flagiello L."/>
            <person name="Mazzarella R."/>
            <person name="Schlessinger D."/>
            <person name="D'Urso M."/>
        </authorList>
    </citation>
    <scope>NUCLEOTIDE SEQUENCE [MRNA] (ISOFORM 1)</scope>
</reference>
<reference key="2">
    <citation type="journal article" date="2000" name="Hum. Mol. Genet.">
        <title>Differentially regulated and evolved genes in the fully sequenced Xq/Yq pseudoautosomal region.</title>
        <authorList>
            <person name="Ciccodicola A."/>
            <person name="D'Esposito M."/>
            <person name="Esposito T."/>
            <person name="Gianfrancesco F."/>
            <person name="Migliaccio C."/>
            <person name="Miano M.G."/>
            <person name="Matarazzo M.R."/>
            <person name="Vacca M."/>
            <person name="Franze A."/>
            <person name="Cuccurese M."/>
            <person name="Cocchia M."/>
            <person name="Curci A."/>
            <person name="Terracciano A."/>
            <person name="Torino A."/>
            <person name="Cocchia S."/>
            <person name="Mercadante G."/>
            <person name="Pannone E."/>
            <person name="Archidiacono N."/>
            <person name="Rocchi M."/>
            <person name="Schlessinger D."/>
            <person name="D'Urso M."/>
        </authorList>
    </citation>
    <scope>NUCLEOTIDE SEQUENCE [GENOMIC DNA]</scope>
</reference>
<reference key="3">
    <citation type="journal article" date="2003" name="Proc. Natl. Acad. Sci. U.S.A.">
        <title>A dual mechanism controlling the localization and function of exocytic v-SNARE.</title>
        <authorList>
            <person name="Martinez-Arca S."/>
            <person name="Rudge R."/>
            <person name="Vacca M."/>
            <person name="Camonis J."/>
            <person name="Daviet L."/>
            <person name="Formstecher E."/>
            <person name="Hamburger A."/>
            <person name="Filippini F."/>
            <person name="D'Esposito M."/>
            <person name="Galli T."/>
        </authorList>
    </citation>
    <scope>NUCLEOTIDE SEQUENCE [MRNA] (ISOFORM 3)</scope>
    <source>
        <tissue>Brain</tissue>
    </source>
</reference>
<reference key="4">
    <citation type="submission" date="2000-09" db="EMBL/GenBank/DDBJ databases">
        <title>Alternative splicing of SYBL1 gene.</title>
        <authorList>
            <person name="D'Esposito M."/>
            <person name="Filippini F."/>
            <person name="Rossi V."/>
            <person name="D'Urso M."/>
        </authorList>
    </citation>
    <scope>NUCLEOTIDE SEQUENCE [MRNA] (ISOFORM 2)</scope>
</reference>
<reference key="5">
    <citation type="submission" date="2005-04" db="EMBL/GenBank/DDBJ databases">
        <authorList>
            <person name="Suzuki Y."/>
            <person name="Sugano S."/>
            <person name="Totoki Y."/>
            <person name="Toyoda A."/>
            <person name="Takeda T."/>
            <person name="Sakaki Y."/>
            <person name="Tanaka A."/>
            <person name="Yokoyama S."/>
        </authorList>
    </citation>
    <scope>NUCLEOTIDE SEQUENCE [LARGE SCALE MRNA] (ISOFORM 1)</scope>
    <source>
        <tissue>Liver</tissue>
    </source>
</reference>
<reference key="6">
    <citation type="journal article" date="2005" name="Nature">
        <title>The DNA sequence of the human X chromosome.</title>
        <authorList>
            <person name="Ross M.T."/>
            <person name="Grafham D.V."/>
            <person name="Coffey A.J."/>
            <person name="Scherer S."/>
            <person name="McLay K."/>
            <person name="Muzny D."/>
            <person name="Platzer M."/>
            <person name="Howell G.R."/>
            <person name="Burrows C."/>
            <person name="Bird C.P."/>
            <person name="Frankish A."/>
            <person name="Lovell F.L."/>
            <person name="Howe K.L."/>
            <person name="Ashurst J.L."/>
            <person name="Fulton R.S."/>
            <person name="Sudbrak R."/>
            <person name="Wen G."/>
            <person name="Jones M.C."/>
            <person name="Hurles M.E."/>
            <person name="Andrews T.D."/>
            <person name="Scott C.E."/>
            <person name="Searle S."/>
            <person name="Ramser J."/>
            <person name="Whittaker A."/>
            <person name="Deadman R."/>
            <person name="Carter N.P."/>
            <person name="Hunt S.E."/>
            <person name="Chen R."/>
            <person name="Cree A."/>
            <person name="Gunaratne P."/>
            <person name="Havlak P."/>
            <person name="Hodgson A."/>
            <person name="Metzker M.L."/>
            <person name="Richards S."/>
            <person name="Scott G."/>
            <person name="Steffen D."/>
            <person name="Sodergren E."/>
            <person name="Wheeler D.A."/>
            <person name="Worley K.C."/>
            <person name="Ainscough R."/>
            <person name="Ambrose K.D."/>
            <person name="Ansari-Lari M.A."/>
            <person name="Aradhya S."/>
            <person name="Ashwell R.I."/>
            <person name="Babbage A.K."/>
            <person name="Bagguley C.L."/>
            <person name="Ballabio A."/>
            <person name="Banerjee R."/>
            <person name="Barker G.E."/>
            <person name="Barlow K.F."/>
            <person name="Barrett I.P."/>
            <person name="Bates K.N."/>
            <person name="Beare D.M."/>
            <person name="Beasley H."/>
            <person name="Beasley O."/>
            <person name="Beck A."/>
            <person name="Bethel G."/>
            <person name="Blechschmidt K."/>
            <person name="Brady N."/>
            <person name="Bray-Allen S."/>
            <person name="Bridgeman A.M."/>
            <person name="Brown A.J."/>
            <person name="Brown M.J."/>
            <person name="Bonnin D."/>
            <person name="Bruford E.A."/>
            <person name="Buhay C."/>
            <person name="Burch P."/>
            <person name="Burford D."/>
            <person name="Burgess J."/>
            <person name="Burrill W."/>
            <person name="Burton J."/>
            <person name="Bye J.M."/>
            <person name="Carder C."/>
            <person name="Carrel L."/>
            <person name="Chako J."/>
            <person name="Chapman J.C."/>
            <person name="Chavez D."/>
            <person name="Chen E."/>
            <person name="Chen G."/>
            <person name="Chen Y."/>
            <person name="Chen Z."/>
            <person name="Chinault C."/>
            <person name="Ciccodicola A."/>
            <person name="Clark S.Y."/>
            <person name="Clarke G."/>
            <person name="Clee C.M."/>
            <person name="Clegg S."/>
            <person name="Clerc-Blankenburg K."/>
            <person name="Clifford K."/>
            <person name="Cobley V."/>
            <person name="Cole C.G."/>
            <person name="Conquer J.S."/>
            <person name="Corby N."/>
            <person name="Connor R.E."/>
            <person name="David R."/>
            <person name="Davies J."/>
            <person name="Davis C."/>
            <person name="Davis J."/>
            <person name="Delgado O."/>
            <person name="Deshazo D."/>
            <person name="Dhami P."/>
            <person name="Ding Y."/>
            <person name="Dinh H."/>
            <person name="Dodsworth S."/>
            <person name="Draper H."/>
            <person name="Dugan-Rocha S."/>
            <person name="Dunham A."/>
            <person name="Dunn M."/>
            <person name="Durbin K.J."/>
            <person name="Dutta I."/>
            <person name="Eades T."/>
            <person name="Ellwood M."/>
            <person name="Emery-Cohen A."/>
            <person name="Errington H."/>
            <person name="Evans K.L."/>
            <person name="Faulkner L."/>
            <person name="Francis F."/>
            <person name="Frankland J."/>
            <person name="Fraser A.E."/>
            <person name="Galgoczy P."/>
            <person name="Gilbert J."/>
            <person name="Gill R."/>
            <person name="Gloeckner G."/>
            <person name="Gregory S.G."/>
            <person name="Gribble S."/>
            <person name="Griffiths C."/>
            <person name="Grocock R."/>
            <person name="Gu Y."/>
            <person name="Gwilliam R."/>
            <person name="Hamilton C."/>
            <person name="Hart E.A."/>
            <person name="Hawes A."/>
            <person name="Heath P.D."/>
            <person name="Heitmann K."/>
            <person name="Hennig S."/>
            <person name="Hernandez J."/>
            <person name="Hinzmann B."/>
            <person name="Ho S."/>
            <person name="Hoffs M."/>
            <person name="Howden P.J."/>
            <person name="Huckle E.J."/>
            <person name="Hume J."/>
            <person name="Hunt P.J."/>
            <person name="Hunt A.R."/>
            <person name="Isherwood J."/>
            <person name="Jacob L."/>
            <person name="Johnson D."/>
            <person name="Jones S."/>
            <person name="de Jong P.J."/>
            <person name="Joseph S.S."/>
            <person name="Keenan S."/>
            <person name="Kelly S."/>
            <person name="Kershaw J.K."/>
            <person name="Khan Z."/>
            <person name="Kioschis P."/>
            <person name="Klages S."/>
            <person name="Knights A.J."/>
            <person name="Kosiura A."/>
            <person name="Kovar-Smith C."/>
            <person name="Laird G.K."/>
            <person name="Langford C."/>
            <person name="Lawlor S."/>
            <person name="Leversha M."/>
            <person name="Lewis L."/>
            <person name="Liu W."/>
            <person name="Lloyd C."/>
            <person name="Lloyd D.M."/>
            <person name="Loulseged H."/>
            <person name="Loveland J.E."/>
            <person name="Lovell J.D."/>
            <person name="Lozado R."/>
            <person name="Lu J."/>
            <person name="Lyne R."/>
            <person name="Ma J."/>
            <person name="Maheshwari M."/>
            <person name="Matthews L.H."/>
            <person name="McDowall J."/>
            <person name="McLaren S."/>
            <person name="McMurray A."/>
            <person name="Meidl P."/>
            <person name="Meitinger T."/>
            <person name="Milne S."/>
            <person name="Miner G."/>
            <person name="Mistry S.L."/>
            <person name="Morgan M."/>
            <person name="Morris S."/>
            <person name="Mueller I."/>
            <person name="Mullikin J.C."/>
            <person name="Nguyen N."/>
            <person name="Nordsiek G."/>
            <person name="Nyakatura G."/>
            <person name="O'dell C.N."/>
            <person name="Okwuonu G."/>
            <person name="Palmer S."/>
            <person name="Pandian R."/>
            <person name="Parker D."/>
            <person name="Parrish J."/>
            <person name="Pasternak S."/>
            <person name="Patel D."/>
            <person name="Pearce A.V."/>
            <person name="Pearson D.M."/>
            <person name="Pelan S.E."/>
            <person name="Perez L."/>
            <person name="Porter K.M."/>
            <person name="Ramsey Y."/>
            <person name="Reichwald K."/>
            <person name="Rhodes S."/>
            <person name="Ridler K.A."/>
            <person name="Schlessinger D."/>
            <person name="Schueler M.G."/>
            <person name="Sehra H.K."/>
            <person name="Shaw-Smith C."/>
            <person name="Shen H."/>
            <person name="Sheridan E.M."/>
            <person name="Shownkeen R."/>
            <person name="Skuce C.D."/>
            <person name="Smith M.L."/>
            <person name="Sotheran E.C."/>
            <person name="Steingruber H.E."/>
            <person name="Steward C.A."/>
            <person name="Storey R."/>
            <person name="Swann R.M."/>
            <person name="Swarbreck D."/>
            <person name="Tabor P.E."/>
            <person name="Taudien S."/>
            <person name="Taylor T."/>
            <person name="Teague B."/>
            <person name="Thomas K."/>
            <person name="Thorpe A."/>
            <person name="Timms K."/>
            <person name="Tracey A."/>
            <person name="Trevanion S."/>
            <person name="Tromans A.C."/>
            <person name="d'Urso M."/>
            <person name="Verduzco D."/>
            <person name="Villasana D."/>
            <person name="Waldron L."/>
            <person name="Wall M."/>
            <person name="Wang Q."/>
            <person name="Warren J."/>
            <person name="Warry G.L."/>
            <person name="Wei X."/>
            <person name="West A."/>
            <person name="Whitehead S.L."/>
            <person name="Whiteley M.N."/>
            <person name="Wilkinson J.E."/>
            <person name="Willey D.L."/>
            <person name="Williams G."/>
            <person name="Williams L."/>
            <person name="Williamson A."/>
            <person name="Williamson H."/>
            <person name="Wilming L."/>
            <person name="Woodmansey R.L."/>
            <person name="Wray P.W."/>
            <person name="Yen J."/>
            <person name="Zhang J."/>
            <person name="Zhou J."/>
            <person name="Zoghbi H."/>
            <person name="Zorilla S."/>
            <person name="Buck D."/>
            <person name="Reinhardt R."/>
            <person name="Poustka A."/>
            <person name="Rosenthal A."/>
            <person name="Lehrach H."/>
            <person name="Meindl A."/>
            <person name="Minx P.J."/>
            <person name="Hillier L.W."/>
            <person name="Willard H.F."/>
            <person name="Wilson R.K."/>
            <person name="Waterston R.H."/>
            <person name="Rice C.M."/>
            <person name="Vaudin M."/>
            <person name="Coulson A."/>
            <person name="Nelson D.L."/>
            <person name="Weinstock G."/>
            <person name="Sulston J.E."/>
            <person name="Durbin R.M."/>
            <person name="Hubbard T."/>
            <person name="Gibbs R.A."/>
            <person name="Beck S."/>
            <person name="Rogers J."/>
            <person name="Bentley D.R."/>
        </authorList>
    </citation>
    <scope>NUCLEOTIDE SEQUENCE [LARGE SCALE GENOMIC DNA]</scope>
</reference>
<reference key="7">
    <citation type="journal article" date="2004" name="Genome Res.">
        <title>The status, quality, and expansion of the NIH full-length cDNA project: the Mammalian Gene Collection (MGC).</title>
        <authorList>
            <consortium name="The MGC Project Team"/>
        </authorList>
    </citation>
    <scope>NUCLEOTIDE SEQUENCE [LARGE SCALE MRNA] (ISOFORM 1)</scope>
    <source>
        <tissue>Hippocampus</tissue>
        <tissue>Uterus</tissue>
    </source>
</reference>
<reference key="8">
    <citation type="submission" date="2005-06" db="UniProtKB">
        <authorList>
            <person name="Bienvenut W.V."/>
        </authorList>
    </citation>
    <scope>PROTEIN SEQUENCE OF 2-10; 126-137 AND 143-150</scope>
    <scope>CLEAVAGE OF INITIATOR METHIONINE</scope>
    <scope>ACETYLATION AT ALA-2</scope>
    <scope>IDENTIFICATION BY MASS SPECTROMETRY</scope>
    <source>
        <tissue>B-cell lymphoma</tissue>
    </source>
</reference>
<reference key="9">
    <citation type="journal article" date="2000" name="Mol. Biol. Cell">
        <title>Syntaxin 7 and VAMP-7 are soluble N-ethylmaleimide-sensitive factor attachment protein receptors required for late endosome-lysosome and homotypic lysosome fusion in alveolar macrophages.</title>
        <authorList>
            <person name="Ward D.M."/>
            <person name="Pevsner J."/>
            <person name="Scullion M.A."/>
            <person name="Vaughn M."/>
            <person name="Kaplan J."/>
        </authorList>
    </citation>
    <scope>FUNCTION</scope>
</reference>
<reference key="10">
    <citation type="journal article" date="2006" name="Allergy">
        <title>A critical role for vesicle-associated membrane protein-7 in exocytosis from human eosinophils and neutrophils.</title>
        <authorList>
            <person name="Logan M.R."/>
            <person name="Lacy P."/>
            <person name="Odemuyiwa S.O."/>
            <person name="Steward M."/>
            <person name="Davoine F."/>
            <person name="Kita H."/>
            <person name="Moqbel R."/>
        </authorList>
    </citation>
    <scope>FUNCTION</scope>
</reference>
<reference key="11">
    <citation type="journal article" date="2007" name="Traffic">
        <title>Integral and associated lysosomal membrane proteins.</title>
        <authorList>
            <person name="Schroeder B."/>
            <person name="Wrocklage C."/>
            <person name="Pan C."/>
            <person name="Jaeger R."/>
            <person name="Koesters B."/>
            <person name="Schaefer H."/>
            <person name="Elsaesser H.-P."/>
            <person name="Mann M."/>
            <person name="Hasilik A."/>
        </authorList>
    </citation>
    <scope>SUBCELLULAR LOCATION [LARGE SCALE ANALYSIS]</scope>
    <source>
        <tissue>Placenta</tissue>
    </source>
</reference>
<reference key="12">
    <citation type="journal article" date="2008" name="Biochem. Biophys. Res. Commun.">
        <title>Vesicle-associated membrane protein 7 (VAMP-7) is essential for target cell killing in a natural killer cell line.</title>
        <authorList>
            <person name="Marcet-Palacios M."/>
            <person name="Odemuyiwa S.O."/>
            <person name="Coughlin J.J."/>
            <person name="Garofoli D."/>
            <person name="Ewen C."/>
            <person name="Davidson C.E."/>
            <person name="Ghaffari M."/>
            <person name="Kane K.P."/>
            <person name="Lacy P."/>
            <person name="Logan M.R."/>
            <person name="Befus A.D."/>
            <person name="Bleackley R.C."/>
            <person name="Moqbel R."/>
        </authorList>
    </citation>
    <scope>FUNCTION</scope>
</reference>
<reference key="13">
    <citation type="journal article" date="2009" name="Anal. Chem.">
        <title>Lys-N and trypsin cover complementary parts of the phosphoproteome in a refined SCX-based approach.</title>
        <authorList>
            <person name="Gauci S."/>
            <person name="Helbig A.O."/>
            <person name="Slijper M."/>
            <person name="Krijgsveld J."/>
            <person name="Heck A.J."/>
            <person name="Mohammed S."/>
        </authorList>
    </citation>
    <scope>IDENTIFICATION BY MASS SPECTROMETRY [LARGE SCALE ANALYSIS]</scope>
</reference>
<reference key="14">
    <citation type="journal article" date="2011" name="BMC Syst. Biol.">
        <title>Initial characterization of the human central proteome.</title>
        <authorList>
            <person name="Burkard T.R."/>
            <person name="Planyavsky M."/>
            <person name="Kaupe I."/>
            <person name="Breitwieser F.P."/>
            <person name="Buerckstuemmer T."/>
            <person name="Bennett K.L."/>
            <person name="Superti-Furga G."/>
            <person name="Colinge J."/>
        </authorList>
    </citation>
    <scope>IDENTIFICATION BY MASS SPECTROMETRY [LARGE SCALE ANALYSIS]</scope>
</reference>
<reference key="15">
    <citation type="journal article" date="2013" name="J. Proteome Res.">
        <title>Toward a comprehensive characterization of a human cancer cell phosphoproteome.</title>
        <authorList>
            <person name="Zhou H."/>
            <person name="Di Palma S."/>
            <person name="Preisinger C."/>
            <person name="Peng M."/>
            <person name="Polat A.N."/>
            <person name="Heck A.J."/>
            <person name="Mohammed S."/>
        </authorList>
    </citation>
    <scope>PHOSPHORYLATION [LARGE SCALE ANALYSIS] AT SER-167</scope>
    <scope>IDENTIFICATION BY MASS SPECTROMETRY [LARGE SCALE ANALYSIS]</scope>
    <source>
        <tissue>Cervix carcinoma</tissue>
        <tissue>Erythroleukemia</tissue>
    </source>
</reference>
<reference key="16">
    <citation type="journal article" date="2013" name="PLoS ONE">
        <title>Uncoupling the functions of CALM in VAMP sorting and clathrin-coated pit formation.</title>
        <authorList>
            <person name="Sahlender D.A."/>
            <person name="Kozik P."/>
            <person name="Miller S.E."/>
            <person name="Peden A.A."/>
            <person name="Robinson M.S."/>
        </authorList>
    </citation>
    <scope>INTERACTION WITH PICALM</scope>
</reference>
<reference key="17">
    <citation type="journal article" date="2014" name="J. Proteomics">
        <title>An enzyme assisted RP-RPLC approach for in-depth analysis of human liver phosphoproteome.</title>
        <authorList>
            <person name="Bian Y."/>
            <person name="Song C."/>
            <person name="Cheng K."/>
            <person name="Dong M."/>
            <person name="Wang F."/>
            <person name="Huang J."/>
            <person name="Sun D."/>
            <person name="Wang L."/>
            <person name="Ye M."/>
            <person name="Zou H."/>
        </authorList>
    </citation>
    <scope>IDENTIFICATION BY MASS SPECTROMETRY [LARGE SCALE ANALYSIS]</scope>
    <source>
        <tissue>Liver</tissue>
    </source>
</reference>
<reference key="18">
    <citation type="journal article" date="2015" name="EMBO Rep.">
        <title>Starvation-induced MTMR13 and RAB21 activity regulates VAMP8 to promote autophagosome-lysosome fusion.</title>
        <authorList>
            <person name="Jean S."/>
            <person name="Cox S."/>
            <person name="Nassari S."/>
            <person name="Kiger A.A."/>
        </authorList>
    </citation>
    <scope>INTERACTION WITH RAB21</scope>
</reference>
<reference key="19">
    <citation type="journal article" date="2015" name="Proteomics">
        <title>N-terminome analysis of the human mitochondrial proteome.</title>
        <authorList>
            <person name="Vaca Jacome A.S."/>
            <person name="Rabilloud T."/>
            <person name="Schaeffer-Reiss C."/>
            <person name="Rompais M."/>
            <person name="Ayoub D."/>
            <person name="Lane L."/>
            <person name="Bairoch A."/>
            <person name="Van Dorsselaer A."/>
            <person name="Carapito C."/>
        </authorList>
    </citation>
    <scope>IDENTIFICATION BY MASS SPECTROMETRY [LARGE SCALE ANALYSIS]</scope>
</reference>
<reference key="20">
    <citation type="submission" date="2006-10" db="PDB data bank">
        <title>Solution structure of the longin domain of synaptobrevin-like protein 1.</title>
        <authorList>
            <consortium name="RIKEN structural genomics initiative (RSGI)"/>
        </authorList>
    </citation>
    <scope>STRUCTURE BY NMR OF 1-118</scope>
</reference>
<organism>
    <name type="scientific">Homo sapiens</name>
    <name type="common">Human</name>
    <dbReference type="NCBI Taxonomy" id="9606"/>
    <lineage>
        <taxon>Eukaryota</taxon>
        <taxon>Metazoa</taxon>
        <taxon>Chordata</taxon>
        <taxon>Craniata</taxon>
        <taxon>Vertebrata</taxon>
        <taxon>Euteleostomi</taxon>
        <taxon>Mammalia</taxon>
        <taxon>Eutheria</taxon>
        <taxon>Euarchontoglires</taxon>
        <taxon>Primates</taxon>
        <taxon>Haplorrhini</taxon>
        <taxon>Catarrhini</taxon>
        <taxon>Hominidae</taxon>
        <taxon>Homo</taxon>
    </lineage>
</organism>
<keyword id="KW-0002">3D-structure</keyword>
<keyword id="KW-0007">Acetylation</keyword>
<keyword id="KW-0025">Alternative splicing</keyword>
<keyword id="KW-0175">Coiled coil</keyword>
<keyword id="KW-0968">Cytoplasmic vesicle</keyword>
<keyword id="KW-0903">Direct protein sequencing</keyword>
<keyword id="KW-0256">Endoplasmic reticulum</keyword>
<keyword id="KW-0967">Endosome</keyword>
<keyword id="KW-0268">Exocytosis</keyword>
<keyword id="KW-0333">Golgi apparatus</keyword>
<keyword id="KW-0458">Lysosome</keyword>
<keyword id="KW-0472">Membrane</keyword>
<keyword id="KW-0597">Phosphoprotein</keyword>
<keyword id="KW-0653">Protein transport</keyword>
<keyword id="KW-1267">Proteomics identification</keyword>
<keyword id="KW-1185">Reference proteome</keyword>
<keyword id="KW-0735">Signal-anchor</keyword>
<keyword id="KW-0770">Synapse</keyword>
<keyword id="KW-0771">Synaptosome</keyword>
<keyword id="KW-0812">Transmembrane</keyword>
<keyword id="KW-1133">Transmembrane helix</keyword>
<keyword id="KW-0813">Transport</keyword>
<accession>P51809</accession>
<accession>Q53GY7</accession>
<accession>Q7Z409</accession>
<accession>Q9H4A7</accession>
<feature type="initiator methionine" description="Removed" evidence="12">
    <location>
        <position position="1"/>
    </location>
</feature>
<feature type="chain" id="PRO_0000206761" description="Vesicle-associated membrane protein 7">
    <location>
        <begin position="2"/>
        <end position="220"/>
    </location>
</feature>
<feature type="topological domain" description="Cytoplasmic" evidence="3">
    <location>
        <begin position="2"/>
        <end position="188"/>
    </location>
</feature>
<feature type="transmembrane region" description="Helical; Anchor for type IV membrane protein" evidence="3">
    <location>
        <begin position="189"/>
        <end position="209"/>
    </location>
</feature>
<feature type="topological domain" description="Vesicular" evidence="3">
    <location>
        <begin position="210"/>
        <end position="220"/>
    </location>
</feature>
<feature type="domain" description="Longin" evidence="4">
    <location>
        <begin position="7"/>
        <end position="110"/>
    </location>
</feature>
<feature type="domain" description="v-SNARE coiled-coil homology" evidence="5">
    <location>
        <begin position="125"/>
        <end position="185"/>
    </location>
</feature>
<feature type="modified residue" description="N-acetylalanine; partial" evidence="12">
    <location>
        <position position="2"/>
    </location>
</feature>
<feature type="modified residue" description="Phosphoserine" evidence="16">
    <location>
        <position position="167"/>
    </location>
</feature>
<feature type="modified residue" description="Phosphoserine" evidence="2">
    <location>
        <position position="168"/>
    </location>
</feature>
<feature type="splice variant" id="VSP_017508" description="In isoform 3." evidence="13">
    <location>
        <begin position="28"/>
        <end position="68"/>
    </location>
</feature>
<feature type="splice variant" id="VSP_017509" description="In isoform 2." evidence="14">
    <original>DLVAQRGERLELLIDKTENLVDSSVTFKTTSRNLARAMCMKNLKLTIIIIIVSIVFIYIIVSPLCGGFTWPSCVKK</original>
    <variation>VCHLQNYQQKSCSSHVYEEPQAHYYHHHRINCVHLYHCFTSLWWIYMAKLCEEIGKKKLPLTKDMREQGVKSNPCDSSLSHTDRWYLPVSSTLFSLFKILFHASRFIFVLSTSLFL</variation>
    <location>
        <begin position="145"/>
        <end position="220"/>
    </location>
</feature>
<feature type="sequence conflict" description="In Ref. 5; BAD96514." evidence="15" ref="5">
    <original>L</original>
    <variation>P</variation>
    <location>
        <position position="98"/>
    </location>
</feature>
<feature type="strand" evidence="17">
    <location>
        <begin position="5"/>
        <end position="10"/>
    </location>
</feature>
<feature type="strand" evidence="17">
    <location>
        <begin position="13"/>
        <end position="19"/>
    </location>
</feature>
<feature type="strand" evidence="17">
    <location>
        <begin position="21"/>
        <end position="23"/>
    </location>
</feature>
<feature type="helix" evidence="17">
    <location>
        <begin position="26"/>
        <end position="33"/>
    </location>
</feature>
<feature type="strand" evidence="17">
    <location>
        <begin position="38"/>
        <end position="40"/>
    </location>
</feature>
<feature type="strand" evidence="17">
    <location>
        <begin position="42"/>
        <end position="47"/>
    </location>
</feature>
<feature type="strand" evidence="17">
    <location>
        <begin position="50"/>
        <end position="57"/>
    </location>
</feature>
<feature type="strand" evidence="17">
    <location>
        <begin position="60"/>
        <end position="70"/>
    </location>
</feature>
<feature type="helix" evidence="17">
    <location>
        <begin position="72"/>
        <end position="89"/>
    </location>
</feature>
<feature type="helix" evidence="17">
    <location>
        <begin position="91"/>
        <end position="95"/>
    </location>
</feature>
<feature type="helix" evidence="17">
    <location>
        <begin position="103"/>
        <end position="117"/>
    </location>
</feature>
<name>VAMP7_HUMAN</name>
<proteinExistence type="evidence at protein level"/>
<comment type="function">
    <text evidence="6 7 9">Involved in the targeting and/or fusion of transport vesicles to their target membrane during transport of proteins from the early endosome to the lysosome. Required for heterotypic fusion of late endosomes with lysosomes and homotypic lysosomal fusion. Required for calcium regulated lysosomal exocytosis. Involved in the export of chylomicrons from the endoplasmic reticulum to the cis Golgi. Required for exocytosis of mediators during eosinophil and neutrophil degranulation, and target cell killing by natural killer cells. Required for focal exocytosis of late endocytic vesicles during phagosome formation.</text>
</comment>
<comment type="subunit">
    <text evidence="1 10 11">Component of the SNARE complex composed of STX4, SNAP23 and VAMP7 that binds SYT7 during lysosomal exocytosis. Component of the SNARE complex composed of STX7, STX8, VAMP7 and VTI1B that is required for heterotypic fusion of late endosomes with lysosomes. May interact with STX17 (By similarity). Interacts with PICALM (PubMed:23741335). Interacts with RAB21 (PubMed:25648148).</text>
</comment>
<comment type="interaction">
    <interactant intactId="EBI-1052205">
        <id>P51809</id>
    </interactant>
    <interactant intactId="EBI-996560">
        <id>P52594</id>
        <label>AGFG1</label>
    </interactant>
    <organismsDiffer>false</organismsDiffer>
    <experiments>7</experiments>
</comment>
<comment type="interaction">
    <interactant intactId="EBI-1052205">
        <id>P51809</id>
    </interactant>
    <interactant intactId="EBI-10244848">
        <id>Q5SQN1</id>
        <label>SNAP47</label>
    </interactant>
    <organismsDiffer>false</organismsDiffer>
    <experiments>4</experiments>
</comment>
<comment type="interaction">
    <interactant intactId="EBI-1052205">
        <id>P51809</id>
    </interactant>
    <interactant intactId="EBI-25475894">
        <id>P0DTC3</id>
        <label>3a</label>
    </interactant>
    <organismsDiffer>true</organismsDiffer>
    <experiments>4</experiments>
</comment>
<comment type="subcellular location">
    <subcellularLocation>
        <location evidence="1">Cytoplasmic vesicle</location>
        <location evidence="1">Secretory vesicle membrane</location>
        <topology evidence="1">Single-pass type IV membrane protein</topology>
    </subcellularLocation>
    <subcellularLocation>
        <location evidence="1">Golgi apparatus</location>
        <location evidence="1">trans-Golgi network membrane</location>
        <topology evidence="1">Single-pass type IV membrane protein</topology>
    </subcellularLocation>
    <subcellularLocation>
        <location evidence="1">Late endosome membrane</location>
        <topology evidence="1">Single-pass type IV membrane protein</topology>
    </subcellularLocation>
    <subcellularLocation>
        <location evidence="8">Lysosome membrane</location>
        <topology evidence="8">Single-pass type IV membrane protein</topology>
    </subcellularLocation>
    <subcellularLocation>
        <location evidence="1">Endoplasmic reticulum membrane</location>
        <topology evidence="1">Single-pass type IV membrane protein</topology>
    </subcellularLocation>
    <subcellularLocation>
        <location evidence="1">Cytoplasmic vesicle</location>
        <location evidence="1">Phagosome membrane</location>
        <topology evidence="1">Single-pass type IV membrane protein</topology>
    </subcellularLocation>
    <subcellularLocation>
        <location evidence="1">Synapse</location>
        <location evidence="1">Synaptosome</location>
    </subcellularLocation>
    <text evidence="1">In immature neurons expression is localized in vesicular structures in axons and dendrites while in mature neurons it is localized to the somatodendritic region. Colocalizes with LAMP1 in kidney cells. Localization to the endoplasmic reticulum membrane was observed in the intestine but not in liver or kidney (By similarity).</text>
</comment>
<comment type="alternative products">
    <event type="alternative splicing"/>
    <isoform>
        <id>P51809-1</id>
        <name>1</name>
        <name>Ti-VAMPa/VAMP7a</name>
        <sequence type="displayed"/>
    </isoform>
    <isoform>
        <id>P51809-2</id>
        <name>2</name>
        <name>Ti-VAMPb/VAMP7b</name>
        <sequence type="described" ref="VSP_017509"/>
    </isoform>
    <isoform>
        <id>P51809-3</id>
        <name>3</name>
        <name>Ti-VAMPc/VAMP7c</name>
        <sequence type="described" ref="VSP_017508"/>
    </isoform>
</comment>
<comment type="tissue specificity">
    <text>Detected in all tissues tested.</text>
</comment>
<comment type="miscellaneous">
    <text>The gene coding for this protein is located in the pseudoautosomal region 2 (PAR2) of X and Y chromosomes.</text>
</comment>
<comment type="miscellaneous">
    <text>Loss-of-function mutant (antisense inhibition) displays impaired granzyme B release and target cell killing by natural killer cells.</text>
</comment>
<comment type="similarity">
    <text evidence="15">Belongs to the synaptobrevin family.</text>
</comment>
<comment type="sequence caution" evidence="15">
    <conflict type="miscellaneous discrepancy">
        <sequence resource="EMBL" id="BI547528"/>
    </conflict>
    <text>Sequence of unknown origin in the C-terminal part.</text>
</comment>
<evidence type="ECO:0000250" key="1"/>
<evidence type="ECO:0000250" key="2">
    <source>
        <dbReference type="UniProtKB" id="P70280"/>
    </source>
</evidence>
<evidence type="ECO:0000255" key="3"/>
<evidence type="ECO:0000255" key="4">
    <source>
        <dbReference type="PROSITE-ProRule" id="PRU00231"/>
    </source>
</evidence>
<evidence type="ECO:0000255" key="5">
    <source>
        <dbReference type="PROSITE-ProRule" id="PRU00290"/>
    </source>
</evidence>
<evidence type="ECO:0000269" key="6">
    <source>
    </source>
</evidence>
<evidence type="ECO:0000269" key="7">
    <source>
    </source>
</evidence>
<evidence type="ECO:0000269" key="8">
    <source>
    </source>
</evidence>
<evidence type="ECO:0000269" key="9">
    <source>
    </source>
</evidence>
<evidence type="ECO:0000269" key="10">
    <source>
    </source>
</evidence>
<evidence type="ECO:0000269" key="11">
    <source>
    </source>
</evidence>
<evidence type="ECO:0000269" key="12">
    <source ref="8"/>
</evidence>
<evidence type="ECO:0000303" key="13">
    <source>
    </source>
</evidence>
<evidence type="ECO:0000303" key="14">
    <source ref="4"/>
</evidence>
<evidence type="ECO:0000305" key="15"/>
<evidence type="ECO:0007744" key="16">
    <source>
    </source>
</evidence>
<evidence type="ECO:0007829" key="17">
    <source>
        <dbReference type="PDB" id="2DMW"/>
    </source>
</evidence>
<gene>
    <name type="primary">VAMP7</name>
    <name type="synonym">SYBL1</name>
</gene>
<sequence length="220" mass="24935">MAILFAVVARGTTILAKHAWCGGNFLEVTEQILAKIPSENNKLTYSHGNYLFHYICQDRIVYLCITDDDFERSRAFNFLNEIKKRFQTTYGSRAQTALPYAMNSEFSSVLAAQLKHHSENKGLDKVMETQAQVDELKGIMVRNIDLVAQRGERLELLIDKTENLVDSSVTFKTTSRNLARAMCMKNLKLTIIIIIVSIVFIYIIVSPLCGGFTWPSCVKK</sequence>